<evidence type="ECO:0000250" key="1">
    <source>
        <dbReference type="UniProtKB" id="G0WXL9"/>
    </source>
</evidence>
<evidence type="ECO:0000269" key="2">
    <source>
    </source>
</evidence>
<evidence type="ECO:0000303" key="3">
    <source>
    </source>
</evidence>
<evidence type="ECO:0000305" key="4"/>
<evidence type="ECO:0000312" key="5">
    <source>
        <dbReference type="EMBL" id="AGQ48122.1"/>
    </source>
</evidence>
<reference key="1">
    <citation type="journal article" date="2013" name="J. Bacteriol.">
        <title>Bacterial CS2 hydrolases from Acidithiobacillus thiooxidans strains are homologous to the archaeal catenane CS2 hydrolase.</title>
        <authorList>
            <person name="Smeulders M.J."/>
            <person name="Pol A."/>
            <person name="Venselaar H."/>
            <person name="Barends T.R."/>
            <person name="Hermans J."/>
            <person name="Jetten M.S."/>
            <person name="Op den Camp H.J."/>
        </authorList>
    </citation>
    <scope>NUCLEOTIDE SEQUENCE [GENOMIC DNA]</scope>
    <scope>FUNCTION</scope>
    <scope>CATALYTIC ACTIVITY</scope>
    <scope>SUBSTRATE SPECIFICITY</scope>
    <scope>BIOPHYSICOCHEMICAL PROPERTIES</scope>
    <scope>SUBUNIT</scope>
    <scope>3D-STRUCTURE MODELING</scope>
    <scope>PATHWAY</scope>
    <source>
        <strain>G8</strain>
    </source>
</reference>
<proteinExistence type="evidence at protein level"/>
<gene>
    <name evidence="5" type="primary">csh</name>
</gene>
<organism>
    <name type="scientific">Acidithiobacillus thiooxidans</name>
    <name type="common">Thiobacillus thiooxidans</name>
    <dbReference type="NCBI Taxonomy" id="930"/>
    <lineage>
        <taxon>Bacteria</taxon>
        <taxon>Pseudomonadati</taxon>
        <taxon>Pseudomonadota</taxon>
        <taxon>Acidithiobacillia</taxon>
        <taxon>Acidithiobacillales</taxon>
        <taxon>Acidithiobacillaceae</taxon>
        <taxon>Acidithiobacillus</taxon>
    </lineage>
</organism>
<keyword id="KW-0378">Hydrolase</keyword>
<keyword id="KW-0479">Metal-binding</keyword>
<keyword id="KW-0862">Zinc</keyword>
<sequence>MSLKQQLESDFEGHKRWALRRQMGIPNNRRLWVCACMDERLPVDDALGIRGDRGDAHVFRNAGGLITDDAIRSAMLTCNFFGTEEIVIINHTECGMMSAQTDTIVKALKDKGIDLDNLQLDPDLPELTLKAGMFGKWVKMYQDVDETCARQVEYMRNHPLIPKHVTISGWIWEVETGHLRPPHFRIGEKVNTNKAMGAK</sequence>
<name>CS2H2_ACITH</name>
<feature type="chain" id="PRO_0000445000" description="Carbon disulfide hydrolase">
    <location>
        <begin position="1"/>
        <end position="199"/>
    </location>
</feature>
<feature type="binding site" evidence="1">
    <location>
        <position position="36"/>
    </location>
    <ligand>
        <name>Zn(2+)</name>
        <dbReference type="ChEBI" id="CHEBI:29105"/>
    </ligand>
</feature>
<feature type="binding site" evidence="1">
    <location>
        <position position="91"/>
    </location>
    <ligand>
        <name>Zn(2+)</name>
        <dbReference type="ChEBI" id="CHEBI:29105"/>
    </ligand>
</feature>
<feature type="binding site" evidence="1">
    <location>
        <position position="94"/>
    </location>
    <ligand>
        <name>Zn(2+)</name>
        <dbReference type="ChEBI" id="CHEBI:29105"/>
    </ligand>
</feature>
<accession>S5FU55</accession>
<dbReference type="EC" id="3.13.1.5" evidence="2"/>
<dbReference type="EMBL" id="KC902814">
    <property type="protein sequence ID" value="AGQ48122.1"/>
    <property type="molecule type" value="Genomic_DNA"/>
</dbReference>
<dbReference type="SMR" id="S5FU55"/>
<dbReference type="BRENDA" id="3.13.1.5">
    <property type="organism ID" value="92"/>
</dbReference>
<dbReference type="UniPathway" id="UPA00140"/>
<dbReference type="GO" id="GO:0004089">
    <property type="term" value="F:carbonate dehydratase activity"/>
    <property type="evidence" value="ECO:0007669"/>
    <property type="project" value="InterPro"/>
</dbReference>
<dbReference type="GO" id="GO:0016787">
    <property type="term" value="F:hydrolase activity"/>
    <property type="evidence" value="ECO:0007669"/>
    <property type="project" value="UniProtKB-KW"/>
</dbReference>
<dbReference type="GO" id="GO:0008270">
    <property type="term" value="F:zinc ion binding"/>
    <property type="evidence" value="ECO:0007669"/>
    <property type="project" value="InterPro"/>
</dbReference>
<dbReference type="GO" id="GO:0070814">
    <property type="term" value="P:hydrogen sulfide biosynthetic process"/>
    <property type="evidence" value="ECO:0007669"/>
    <property type="project" value="UniProtKB-UniPathway"/>
</dbReference>
<dbReference type="CDD" id="cd03379">
    <property type="entry name" value="beta_CA_cladeD"/>
    <property type="match status" value="1"/>
</dbReference>
<dbReference type="Gene3D" id="3.40.1050.10">
    <property type="entry name" value="Carbonic anhydrase"/>
    <property type="match status" value="1"/>
</dbReference>
<dbReference type="InterPro" id="IPR001765">
    <property type="entry name" value="Carbonic_anhydrase"/>
</dbReference>
<dbReference type="InterPro" id="IPR036874">
    <property type="entry name" value="Carbonic_anhydrase_sf"/>
</dbReference>
<dbReference type="PANTHER" id="PTHR43175:SF3">
    <property type="entry name" value="CARBON DISULFIDE HYDROLASE"/>
    <property type="match status" value="1"/>
</dbReference>
<dbReference type="PANTHER" id="PTHR43175">
    <property type="entry name" value="CARBONIC ANHYDRASE"/>
    <property type="match status" value="1"/>
</dbReference>
<dbReference type="Pfam" id="PF00484">
    <property type="entry name" value="Pro_CA"/>
    <property type="match status" value="1"/>
</dbReference>
<dbReference type="SMART" id="SM00947">
    <property type="entry name" value="Pro_CA"/>
    <property type="match status" value="1"/>
</dbReference>
<dbReference type="SUPFAM" id="SSF53056">
    <property type="entry name" value="beta-carbonic anhydrase, cab"/>
    <property type="match status" value="1"/>
</dbReference>
<protein>
    <recommendedName>
        <fullName evidence="3">Carbon disulfide hydrolase</fullName>
        <shortName evidence="3">CS(2) hydrolase</shortName>
        <ecNumber evidence="2">3.13.1.5</ecNumber>
    </recommendedName>
</protein>
<comment type="function">
    <text evidence="2">Catalyzes the conversion of carbon disulfide into hydrogen sulfide and carbon dioxide, with carbonyl sulfide as an intermediate. Likely plays a key role in sulfur metabolism that allows A.thiooxidans G8 to grow on carbon disulfide as the main carbon and energy source. Does not show carbonic anhydrase activity (hydration of CO(2) to carbonate).</text>
</comment>
<comment type="catalytic activity">
    <reaction evidence="2">
        <text>carbon disulfide + 2 H2O = 2 hydrogen sulfide + CO2 + 2 H(+)</text>
        <dbReference type="Rhea" id="RHEA:38143"/>
        <dbReference type="ChEBI" id="CHEBI:15377"/>
        <dbReference type="ChEBI" id="CHEBI:15378"/>
        <dbReference type="ChEBI" id="CHEBI:16526"/>
        <dbReference type="ChEBI" id="CHEBI:23012"/>
        <dbReference type="ChEBI" id="CHEBI:29919"/>
        <dbReference type="EC" id="3.13.1.5"/>
    </reaction>
</comment>
<comment type="cofactor">
    <cofactor evidence="1">
        <name>Zn(2+)</name>
        <dbReference type="ChEBI" id="CHEBI:29105"/>
    </cofactor>
    <text evidence="1">Binds 1 zinc ion per subunit.</text>
</comment>
<comment type="biophysicochemical properties">
    <kinetics>
        <KM evidence="2">46 uM for carbon disulfide</KM>
        <KM evidence="2">14 uM for carbonyl sulfide</KM>
        <Vmax evidence="2">131.0 nmol/min/ug enzyme towards hydrogen sulfide formation from carbon disulfide</Vmax>
        <Vmax evidence="2">97.0 nmol/min/ug enzyme towards hydrogen sulfide formation from carbonyl sulfide</Vmax>
        <text evidence="2">kcat is 3000 sec(-1) with carbon disulfide as substrate. kcat is 22400 sec(-1) with the intermediate carbonyl sulfide as substrate.</text>
    </kinetics>
</comment>
<comment type="pathway">
    <text evidence="2">Sulfur metabolism; hydrogen sulfide biosynthesis.</text>
</comment>
<comment type="subunit">
    <text evidence="2">Exists as both octamers and hexadecamers in solution. The hexadecameric homooligomer may form a catenane, through interactions of two interlocked octameric rings.</text>
</comment>
<comment type="similarity">
    <text evidence="4">Belongs to the beta-class carbonic anhydrase family.</text>
</comment>